<comment type="function">
    <text evidence="2">Catalyzes the decarboxylation of 3,4-dihydroxyphthalate to protocatechuate (3,4-dihydroxybenzoate) during phthalate metabolism.</text>
</comment>
<comment type="catalytic activity">
    <reaction evidence="2">
        <text>3,4-dihydroxyphthalate + H(+) = 3,4-dihydroxybenzoate + CO2</text>
        <dbReference type="Rhea" id="RHEA:18601"/>
        <dbReference type="ChEBI" id="CHEBI:15378"/>
        <dbReference type="ChEBI" id="CHEBI:16526"/>
        <dbReference type="ChEBI" id="CHEBI:36241"/>
        <dbReference type="ChEBI" id="CHEBI:58137"/>
        <dbReference type="EC" id="4.1.1.69"/>
    </reaction>
    <physiologicalReaction direction="left-to-right" evidence="2">
        <dbReference type="Rhea" id="RHEA:18602"/>
    </physiologicalReaction>
</comment>
<comment type="cofactor">
    <cofactor evidence="1">
        <name>a divalent metal cation</name>
        <dbReference type="ChEBI" id="CHEBI:60240"/>
    </cofactor>
</comment>
<comment type="pathway">
    <text evidence="6">Xenobiotic degradation; phthalate degradation.</text>
</comment>
<comment type="induction">
    <text evidence="3">Expressed in phthalate-grown cells.</text>
</comment>
<comment type="similarity">
    <text evidence="5">Belongs to the aldolase class II family.</text>
</comment>
<organism>
    <name type="scientific">Rhodococcus jostii (strain RHA1)</name>
    <dbReference type="NCBI Taxonomy" id="101510"/>
    <lineage>
        <taxon>Bacteria</taxon>
        <taxon>Bacillati</taxon>
        <taxon>Actinomycetota</taxon>
        <taxon>Actinomycetes</taxon>
        <taxon>Mycobacteriales</taxon>
        <taxon>Nocardiaceae</taxon>
        <taxon>Rhodococcus</taxon>
    </lineage>
</organism>
<dbReference type="EC" id="4.1.1.69" evidence="2"/>
<dbReference type="EMBL" id="CP000432">
    <property type="protein sequence ID" value="ABG99206.1"/>
    <property type="molecule type" value="Genomic_DNA"/>
</dbReference>
<dbReference type="EMBL" id="CP000433">
    <property type="protein sequence ID" value="ABH00407.1"/>
    <property type="molecule type" value="Genomic_DNA"/>
</dbReference>
<dbReference type="RefSeq" id="WP_011599098.1">
    <property type="nucleotide sequence ID" value="NC_008269.1"/>
</dbReference>
<dbReference type="SMR" id="Q0RWC9"/>
<dbReference type="KEGG" id="rha:RHA1_ro08161"/>
<dbReference type="KEGG" id="rha:RHA1_ro10214"/>
<dbReference type="PATRIC" id="fig|101510.16.peg.8617"/>
<dbReference type="HOGENOM" id="CLU_006033_2_0_11"/>
<dbReference type="OrthoDB" id="3729465at2"/>
<dbReference type="UniPathway" id="UPA00726"/>
<dbReference type="Proteomes" id="UP000008710">
    <property type="component" value="Plasmid pRHL1"/>
</dbReference>
<dbReference type="Proteomes" id="UP000008710">
    <property type="component" value="Plasmid pRHL2"/>
</dbReference>
<dbReference type="GO" id="GO:0005829">
    <property type="term" value="C:cytosol"/>
    <property type="evidence" value="ECO:0007669"/>
    <property type="project" value="TreeGrafter"/>
</dbReference>
<dbReference type="GO" id="GO:0047556">
    <property type="term" value="F:3,4-dihydroxyphthalate decarboxylase activity"/>
    <property type="evidence" value="ECO:0007669"/>
    <property type="project" value="UniProtKB-EC"/>
</dbReference>
<dbReference type="GO" id="GO:0016832">
    <property type="term" value="F:aldehyde-lyase activity"/>
    <property type="evidence" value="ECO:0007669"/>
    <property type="project" value="TreeGrafter"/>
</dbReference>
<dbReference type="GO" id="GO:0046872">
    <property type="term" value="F:metal ion binding"/>
    <property type="evidence" value="ECO:0007669"/>
    <property type="project" value="UniProtKB-KW"/>
</dbReference>
<dbReference type="GO" id="GO:0019323">
    <property type="term" value="P:pentose catabolic process"/>
    <property type="evidence" value="ECO:0007669"/>
    <property type="project" value="TreeGrafter"/>
</dbReference>
<dbReference type="Gene3D" id="3.40.225.10">
    <property type="entry name" value="Class II aldolase/adducin N-terminal domain"/>
    <property type="match status" value="1"/>
</dbReference>
<dbReference type="InterPro" id="IPR050197">
    <property type="entry name" value="Aldolase_class_II_sugar_metab"/>
</dbReference>
<dbReference type="InterPro" id="IPR001303">
    <property type="entry name" value="Aldolase_II/adducin_N"/>
</dbReference>
<dbReference type="InterPro" id="IPR036409">
    <property type="entry name" value="Aldolase_II/adducin_N_sf"/>
</dbReference>
<dbReference type="PANTHER" id="PTHR22789:SF0">
    <property type="entry name" value="3-OXO-TETRONATE 4-PHOSPHATE DECARBOXYLASE-RELATED"/>
    <property type="match status" value="1"/>
</dbReference>
<dbReference type="PANTHER" id="PTHR22789">
    <property type="entry name" value="FUCULOSE PHOSPHATE ALDOLASE"/>
    <property type="match status" value="1"/>
</dbReference>
<dbReference type="Pfam" id="PF00596">
    <property type="entry name" value="Aldolase_II"/>
    <property type="match status" value="1"/>
</dbReference>
<dbReference type="SMART" id="SM01007">
    <property type="entry name" value="Aldolase_II"/>
    <property type="match status" value="1"/>
</dbReference>
<dbReference type="SUPFAM" id="SSF53639">
    <property type="entry name" value="AraD/HMP-PK domain-like"/>
    <property type="match status" value="1"/>
</dbReference>
<gene>
    <name evidence="5" type="primary">padC1</name>
    <name evidence="7" type="synonym">padC</name>
    <name evidence="7" type="ordered locus">RHA1_ro08161</name>
</gene>
<gene>
    <name evidence="5" type="primary">padC2</name>
    <name evidence="8" type="synonym">padc</name>
    <name evidence="8" type="ordered locus">RHA1_ro10214</name>
</gene>
<feature type="chain" id="PRO_0000461274" description="3,4-dihydroxyphthalate decarboxylase">
    <location>
        <begin position="1"/>
        <end position="243"/>
    </location>
</feature>
<feature type="active site" description="Proton donor/acceptor" evidence="1">
    <location>
        <position position="86"/>
    </location>
</feature>
<feature type="binding site" evidence="1">
    <location>
        <position position="86"/>
    </location>
    <ligand>
        <name>a divalent metal cation</name>
        <dbReference type="ChEBI" id="CHEBI:60240"/>
    </ligand>
</feature>
<feature type="binding site" evidence="1">
    <location>
        <position position="105"/>
    </location>
    <ligand>
        <name>a divalent metal cation</name>
        <dbReference type="ChEBI" id="CHEBI:60240"/>
    </ligand>
</feature>
<feature type="binding site" evidence="1">
    <location>
        <position position="107"/>
    </location>
    <ligand>
        <name>a divalent metal cation</name>
        <dbReference type="ChEBI" id="CHEBI:60240"/>
    </ligand>
</feature>
<feature type="binding site" evidence="1">
    <location>
        <position position="173"/>
    </location>
    <ligand>
        <name>a divalent metal cation</name>
        <dbReference type="ChEBI" id="CHEBI:60240"/>
    </ligand>
</feature>
<name>DHPDC_RHOJR</name>
<geneLocation type="plasmid" evidence="7">
    <name>pRHL1</name>
</geneLocation>
<geneLocation type="plasmid" evidence="8">
    <name>pRHL2</name>
</geneLocation>
<sequence length="243" mass="25691">MNETDIEGARVVVAEACRVAAARGLMEGILGHISFRVSPDLLLIRCRSADDTGVAYTRPSDIRLVRFDGTAGAPGELDNGYQVPKELPVHVESMRASPDIRAVAHLHPPSIVAADLAGISLRPIYGAYDIPGAVLARGGVPVYRRAVLIHSTQLGKEMVTAMGDRPVVICRGHGITSVASSVQQSVLQAASLEELARMSLAVVSAGGTLVDIDDADWEDLPDLGANFNTGAVWRHEVARAATV</sequence>
<accession>Q0RWC9</accession>
<keyword id="KW-0456">Lyase</keyword>
<keyword id="KW-0479">Metal-binding</keyword>
<keyword id="KW-0614">Plasmid</keyword>
<proteinExistence type="evidence at protein level"/>
<evidence type="ECO:0000250" key="1">
    <source>
        <dbReference type="UniProtKB" id="P0AB87"/>
    </source>
</evidence>
<evidence type="ECO:0000250" key="2">
    <source>
        <dbReference type="UniProtKB" id="Q9AGK2"/>
    </source>
</evidence>
<evidence type="ECO:0000269" key="3">
    <source>
    </source>
</evidence>
<evidence type="ECO:0000303" key="4">
    <source>
    </source>
</evidence>
<evidence type="ECO:0000305" key="5"/>
<evidence type="ECO:0000305" key="6">
    <source>
    </source>
</evidence>
<evidence type="ECO:0000312" key="7">
    <source>
        <dbReference type="EMBL" id="ABG99206.1"/>
    </source>
</evidence>
<evidence type="ECO:0000312" key="8">
    <source>
        <dbReference type="EMBL" id="ABH00407.1"/>
    </source>
</evidence>
<protein>
    <recommendedName>
        <fullName evidence="4">3,4-dihydroxyphthalate decarboxylase</fullName>
        <ecNumber evidence="2">4.1.1.69</ecNumber>
    </recommendedName>
</protein>
<reference key="1">
    <citation type="journal article" date="2006" name="Proc. Natl. Acad. Sci. U.S.A.">
        <title>The complete genome of Rhodococcus sp. RHA1 provides insights into a catabolic powerhouse.</title>
        <authorList>
            <person name="McLeod M.P."/>
            <person name="Warren R.L."/>
            <person name="Hsiao W.W.L."/>
            <person name="Araki N."/>
            <person name="Myhre M."/>
            <person name="Fernandes C."/>
            <person name="Miyazawa D."/>
            <person name="Wong W."/>
            <person name="Lillquist A.L."/>
            <person name="Wang D."/>
            <person name="Dosanjh M."/>
            <person name="Hara H."/>
            <person name="Petrescu A."/>
            <person name="Morin R.D."/>
            <person name="Yang G."/>
            <person name="Stott J.M."/>
            <person name="Schein J.E."/>
            <person name="Shin H."/>
            <person name="Smailus D."/>
            <person name="Siddiqui A.S."/>
            <person name="Marra M.A."/>
            <person name="Jones S.J.M."/>
            <person name="Holt R."/>
            <person name="Brinkman F.S.L."/>
            <person name="Miyauchi K."/>
            <person name="Fukuda M."/>
            <person name="Davies J.E."/>
            <person name="Mohn W.W."/>
            <person name="Eltis L.D."/>
        </authorList>
    </citation>
    <scope>NUCLEOTIDE SEQUENCE [LARGE SCALE GENOMIC DNA]</scope>
    <source>
        <strain>RHA1</strain>
        <plasmid evidence="7">pRHL1</plasmid>
        <plasmid evidence="8">pRHL2</plasmid>
    </source>
</reference>
<reference key="2">
    <citation type="journal article" date="2005" name="J. Bacteriol.">
        <title>Catabolism of benzoate and phthalate in Rhodococcus sp. strain RHA1: redundancies and convergence.</title>
        <authorList>
            <person name="Patrauchan M.A."/>
            <person name="Florizone C."/>
            <person name="Dosanjh M."/>
            <person name="Mohn W.W."/>
            <person name="Davies J."/>
            <person name="Eltis L.D."/>
        </authorList>
    </citation>
    <scope>IDENTIFICATION BY MASS SPECTROMETRY</scope>
    <scope>INDUCTION</scope>
    <source>
        <strain>RHA1</strain>
    </source>
</reference>